<gene>
    <name type="primary">gmhB</name>
    <name type="synonym">yaeD</name>
    <name type="ordered locus">b0200</name>
    <name type="ordered locus">JW0196</name>
</gene>
<organism>
    <name type="scientific">Escherichia coli (strain K12)</name>
    <dbReference type="NCBI Taxonomy" id="83333"/>
    <lineage>
        <taxon>Bacteria</taxon>
        <taxon>Pseudomonadati</taxon>
        <taxon>Pseudomonadota</taxon>
        <taxon>Gammaproteobacteria</taxon>
        <taxon>Enterobacterales</taxon>
        <taxon>Enterobacteriaceae</taxon>
        <taxon>Escherichia</taxon>
    </lineage>
</organism>
<proteinExistence type="evidence at protein level"/>
<name>GMHBB_ECOLI</name>
<comment type="function">
    <text evidence="2 3 5 7">Converts the D-glycero-beta-D-manno-heptose 1,7-bisphosphate (beta-HBP) intermediate into D-glycero-beta-D-manno-heptose 1-phosphate by removing the phosphate group at the C-7 position.</text>
</comment>
<comment type="catalytic activity">
    <reaction evidence="2 3 4 5 7">
        <text>D-glycero-beta-D-manno-heptose 1,7-bisphosphate + H2O = D-glycero-beta-D-manno-heptose 1-phosphate + phosphate</text>
        <dbReference type="Rhea" id="RHEA:28518"/>
        <dbReference type="ChEBI" id="CHEBI:15377"/>
        <dbReference type="ChEBI" id="CHEBI:43474"/>
        <dbReference type="ChEBI" id="CHEBI:60208"/>
        <dbReference type="ChEBI" id="CHEBI:61593"/>
        <dbReference type="EC" id="3.1.3.82"/>
    </reaction>
</comment>
<comment type="cofactor">
    <cofactor evidence="3 4">
        <name>Mg(2+)</name>
        <dbReference type="ChEBI" id="CHEBI:18420"/>
    </cofactor>
    <cofactor evidence="3 4">
        <name>Mn(2+)</name>
        <dbReference type="ChEBI" id="CHEBI:29035"/>
    </cofactor>
    <cofactor evidence="3">
        <name>Co(2+)</name>
        <dbReference type="ChEBI" id="CHEBI:48828"/>
    </cofactor>
    <text evidence="3">Magnesium. Can also use other divalent metal cations as manganese and cobalt.</text>
</comment>
<comment type="cofactor">
    <cofactor evidence="3">
        <name>Zn(2+)</name>
        <dbReference type="ChEBI" id="CHEBI:29105"/>
    </cofactor>
</comment>
<comment type="biophysicochemical properties">
    <kinetics>
        <KM evidence="3 5 6 7">5 uM for beta-HBP (at pH 7.5 and 25 degrees Celsius)</KM>
        <KM evidence="3 5 6 7">67 uM for alpha-HBP (at pH 7.5 and 25 degrees Celsius)</KM>
        <KM evidence="3 5 6">0.2 mM for HBP (at pH 8)</KM>
        <KM evidence="3 5 6">0.42 mM for fructose-1,6-bisphosphate (at pH 9)</KM>
        <KM evidence="3 5 6">610 uM for sedoheptulose-1,7-bisphosphate (at pH 7.5)</KM>
        <KM evidence="3 5 6">1501 uM for fructose-1,6-bisphosphate (at pH 7.5)</KM>
        <text evidence="5 7">kcat is 35.7 sec(-1) and 4.6 sec(-1) with beta-HBP and alpha-HBP as substrate, respectively. Thus, the enzyme displays 100-fold more efficiency towards the beta- than the alpha-anomer (PubMed:20050615, PubMed:31449400). kcat is 0.51 sec(-1) and 0.039 sec(-1) with sedoheptulose-1,7-bisphosphate and fructose-1,6-bisphosphate as substrate, respectively (PubMed:20050615).</text>
    </kinetics>
    <phDependence>
        <text evidence="3 6">Optimum pH is between 6 and 7.5.</text>
    </phDependence>
</comment>
<comment type="pathway">
    <text evidence="2 3 5">Nucleotide-sugar biosynthesis; ADP-L-glycero-beta-D-manno-heptose biosynthesis; ADP-L-glycero-beta-D-manno-heptose from D-glycero-beta-D-manno-heptose 7-phosphate: step 2/4.</text>
</comment>
<comment type="pathway">
    <text evidence="2 6">Bacterial outer membrane biogenesis; LPS core biosynthesis.</text>
</comment>
<comment type="subunit">
    <text evidence="4 6">Monomer.</text>
</comment>
<comment type="subcellular location">
    <subcellularLocation>
        <location evidence="1">Cytoplasm</location>
    </subcellularLocation>
</comment>
<comment type="disruption phenotype">
    <text evidence="2 6">Cells lacking this gene result in the formation of an altered LPS core, but does not appear to disrupt full-length LPS production to an extent that the outer membrane permeability barrier is compromised.</text>
</comment>
<comment type="miscellaneous">
    <text>Phosphatase activity is essential for nucleotide activation (fourth step). Zinc ion does not directly participate in catalysis, but probably functions to stabilize the loop conformation.</text>
</comment>
<comment type="similarity">
    <text evidence="8">Belongs to the GmhB family.</text>
</comment>
<comment type="sequence caution" evidence="8">
    <conflict type="erroneous initiation">
        <sequence resource="EMBL-CDS" id="BAA03661"/>
    </conflict>
    <text>Truncated N-terminus.</text>
</comment>
<feature type="chain" id="PRO_0000209389" description="D-glycero-beta-D-manno-heptose-1,7-bisphosphate 7-phosphatase">
    <location>
        <begin position="1"/>
        <end position="191"/>
    </location>
</feature>
<feature type="active site" description="Nucleophile" evidence="6">
    <location>
        <position position="11"/>
    </location>
</feature>
<feature type="active site" description="Proton donor" evidence="4 6">
    <location>
        <position position="13"/>
    </location>
</feature>
<feature type="binding site" evidence="4 6">
    <location>
        <begin position="11"/>
        <end position="13"/>
    </location>
    <ligand>
        <name>substrate</name>
    </ligand>
</feature>
<feature type="binding site" evidence="4">
    <location>
        <position position="11"/>
    </location>
    <ligand>
        <name>Mg(2+)</name>
        <dbReference type="ChEBI" id="CHEBI:18420"/>
    </ligand>
</feature>
<feature type="binding site" evidence="4">
    <location>
        <position position="13"/>
    </location>
    <ligand>
        <name>Mg(2+)</name>
        <dbReference type="ChEBI" id="CHEBI:18420"/>
    </ligand>
</feature>
<feature type="binding site" evidence="4">
    <location>
        <begin position="19"/>
        <end position="22"/>
    </location>
    <ligand>
        <name>substrate</name>
    </ligand>
</feature>
<feature type="binding site" evidence="4 6">
    <location>
        <begin position="53"/>
        <end position="56"/>
    </location>
    <ligand>
        <name>substrate</name>
    </ligand>
</feature>
<feature type="binding site" evidence="4">
    <location>
        <position position="92"/>
    </location>
    <ligand>
        <name>Zn(2+)</name>
        <dbReference type="ChEBI" id="CHEBI:29105"/>
    </ligand>
</feature>
<feature type="binding site" evidence="4">
    <location>
        <position position="94"/>
    </location>
    <ligand>
        <name>Zn(2+)</name>
        <dbReference type="ChEBI" id="CHEBI:29105"/>
    </ligand>
</feature>
<feature type="binding site" evidence="4">
    <location>
        <position position="107"/>
    </location>
    <ligand>
        <name>Zn(2+)</name>
        <dbReference type="ChEBI" id="CHEBI:29105"/>
    </ligand>
</feature>
<feature type="binding site" evidence="4">
    <location>
        <position position="109"/>
    </location>
    <ligand>
        <name>Zn(2+)</name>
        <dbReference type="ChEBI" id="CHEBI:29105"/>
    </ligand>
</feature>
<feature type="binding site" evidence="4">
    <location>
        <begin position="110"/>
        <end position="111"/>
    </location>
    <ligand>
        <name>substrate</name>
    </ligand>
</feature>
<feature type="binding site" evidence="4">
    <location>
        <position position="136"/>
    </location>
    <ligand>
        <name>Mg(2+)</name>
        <dbReference type="ChEBI" id="CHEBI:18420"/>
    </ligand>
</feature>
<feature type="binding site" evidence="4">
    <location>
        <position position="137"/>
    </location>
    <ligand>
        <name>Mg(2+)</name>
        <dbReference type="ChEBI" id="CHEBI:18420"/>
    </ligand>
</feature>
<feature type="binding site" evidence="4">
    <location>
        <position position="137"/>
    </location>
    <ligand>
        <name>substrate</name>
    </ligand>
</feature>
<feature type="site" description="Stabilizes the phosphoryl group" evidence="4 6">
    <location>
        <position position="53"/>
    </location>
</feature>
<feature type="site" description="Contributes to substrate recognition" evidence="4">
    <location>
        <position position="110"/>
    </location>
</feature>
<feature type="site" description="Stabilizes the phosphoryl group" evidence="4">
    <location>
        <position position="111"/>
    </location>
</feature>
<feature type="mutagenesis site" description="Inactive." evidence="6">
    <original>D</original>
    <variation>N</variation>
    <location>
        <position position="11"/>
    </location>
</feature>
<feature type="mutagenesis site" description="Inactive." evidence="4 6">
    <original>D</original>
    <variation>A</variation>
    <location>
        <position position="13"/>
    </location>
</feature>
<feature type="mutagenesis site" description="Inactive." evidence="4 6">
    <original>D</original>
    <variation>N</variation>
    <location>
        <position position="13"/>
    </location>
</feature>
<feature type="mutagenesis site" description="Reduces the catalytic efficiencies towards the alpha and beta-anomers of HBP." evidence="4">
    <original>C</original>
    <variation>A</variation>
    <location>
        <position position="92"/>
    </location>
</feature>
<feature type="mutagenesis site" description="More than 3-fold reduction in the affinity binding of HBP. Reduces the catalytic efficiencies towards the alpha and beta-anomers of HBP." evidence="4 6">
    <original>C</original>
    <variation>A</variation>
    <location>
        <position position="107"/>
    </location>
</feature>
<feature type="mutagenesis site" description="Reduces the catalytic efficiencies towards the alpha and beta-anomers of HBP." evidence="4">
    <original>C</original>
    <variation>A</variation>
    <location>
        <position position="109"/>
    </location>
</feature>
<feature type="mutagenesis site" description="Significant reduction in the catalytic efficiency of hydrolysis of the physiological substrate HBP." evidence="4">
    <original>R</original>
    <variation>A</variation>
    <location>
        <position position="110"/>
    </location>
</feature>
<feature type="mutagenesis site" description="Inactive." evidence="6">
    <original>K</original>
    <variation>N</variation>
    <location>
        <position position="111"/>
    </location>
</feature>
<feature type="mutagenesis site" description="8-fold reduction in the affinity binding of HBP." evidence="4">
    <original>K</original>
    <variation>A</variation>
    <location>
        <position position="137"/>
    </location>
</feature>
<feature type="strand" evidence="9">
    <location>
        <begin position="7"/>
        <end position="10"/>
    </location>
</feature>
<feature type="turn" evidence="9">
    <location>
        <begin position="13"/>
        <end position="15"/>
    </location>
</feature>
<feature type="helix" evidence="9">
    <location>
        <begin position="26"/>
        <end position="28"/>
    </location>
</feature>
<feature type="helix" evidence="9">
    <location>
        <begin position="35"/>
        <end position="44"/>
    </location>
</feature>
<feature type="strand" evidence="9">
    <location>
        <begin position="48"/>
        <end position="54"/>
    </location>
</feature>
<feature type="helix" evidence="9">
    <location>
        <begin position="57"/>
        <end position="60"/>
    </location>
</feature>
<feature type="helix" evidence="9">
    <location>
        <begin position="65"/>
        <end position="81"/>
    </location>
</feature>
<feature type="strand" evidence="9">
    <location>
        <begin position="87"/>
        <end position="92"/>
    </location>
</feature>
<feature type="helix" evidence="9">
    <location>
        <begin position="101"/>
        <end position="103"/>
    </location>
</feature>
<feature type="strand" evidence="9">
    <location>
        <begin position="108"/>
        <end position="110"/>
    </location>
</feature>
<feature type="helix" evidence="9">
    <location>
        <begin position="115"/>
        <end position="124"/>
    </location>
</feature>
<feature type="helix" evidence="9">
    <location>
        <begin position="128"/>
        <end position="130"/>
    </location>
</feature>
<feature type="strand" evidence="9">
    <location>
        <begin position="132"/>
        <end position="137"/>
    </location>
</feature>
<feature type="helix" evidence="9">
    <location>
        <begin position="138"/>
        <end position="146"/>
    </location>
</feature>
<feature type="strand" evidence="9">
    <location>
        <begin position="150"/>
        <end position="159"/>
    </location>
</feature>
<feature type="helix" evidence="9">
    <location>
        <begin position="163"/>
        <end position="168"/>
    </location>
</feature>
<feature type="strand" evidence="9">
    <location>
        <begin position="170"/>
        <end position="174"/>
    </location>
</feature>
<feature type="helix" evidence="9">
    <location>
        <begin position="176"/>
        <end position="178"/>
    </location>
</feature>
<feature type="helix" evidence="9">
    <location>
        <begin position="179"/>
        <end position="184"/>
    </location>
</feature>
<evidence type="ECO:0000250" key="1"/>
<evidence type="ECO:0000269" key="2">
    <source>
    </source>
</evidence>
<evidence type="ECO:0000269" key="3">
    <source>
    </source>
</evidence>
<evidence type="ECO:0000269" key="4">
    <source>
    </source>
</evidence>
<evidence type="ECO:0000269" key="5">
    <source>
    </source>
</evidence>
<evidence type="ECO:0000269" key="6">
    <source>
    </source>
</evidence>
<evidence type="ECO:0000269" key="7">
    <source>
    </source>
</evidence>
<evidence type="ECO:0000305" key="8"/>
<evidence type="ECO:0007829" key="9">
    <source>
        <dbReference type="PDB" id="2GMW"/>
    </source>
</evidence>
<keyword id="KW-0002">3D-structure</keyword>
<keyword id="KW-0119">Carbohydrate metabolism</keyword>
<keyword id="KW-0963">Cytoplasm</keyword>
<keyword id="KW-0378">Hydrolase</keyword>
<keyword id="KW-0448">Lipopolysaccharide biosynthesis</keyword>
<keyword id="KW-0460">Magnesium</keyword>
<keyword id="KW-0479">Metal-binding</keyword>
<keyword id="KW-1185">Reference proteome</keyword>
<keyword id="KW-0862">Zinc</keyword>
<protein>
    <recommendedName>
        <fullName>D-glycero-beta-D-manno-heptose-1,7-bisphosphate 7-phosphatase</fullName>
        <ecNumber evidence="2 3 4 5 7">3.1.3.82</ecNumber>
    </recommendedName>
    <alternativeName>
        <fullName>D,D-heptose 1,7-bisphosphate phosphatase</fullName>
        <shortName>HBP phosphatase</shortName>
    </alternativeName>
</protein>
<dbReference type="EC" id="3.1.3.82" evidence="2 3 4 5 7"/>
<dbReference type="EMBL" id="D15061">
    <property type="protein sequence ID" value="BAA03661.1"/>
    <property type="status" value="ALT_INIT"/>
    <property type="molecule type" value="Genomic_DNA"/>
</dbReference>
<dbReference type="EMBL" id="U00096">
    <property type="protein sequence ID" value="AAC73311.1"/>
    <property type="molecule type" value="Genomic_DNA"/>
</dbReference>
<dbReference type="EMBL" id="AP009048">
    <property type="protein sequence ID" value="BAA77877.1"/>
    <property type="molecule type" value="Genomic_DNA"/>
</dbReference>
<dbReference type="EMBL" id="U70214">
    <property type="protein sequence ID" value="AAB08628.1"/>
    <property type="molecule type" value="Genomic_DNA"/>
</dbReference>
<dbReference type="PIR" id="H64744">
    <property type="entry name" value="H64744"/>
</dbReference>
<dbReference type="RefSeq" id="NP_414742.1">
    <property type="nucleotide sequence ID" value="NC_000913.3"/>
</dbReference>
<dbReference type="RefSeq" id="WP_001140187.1">
    <property type="nucleotide sequence ID" value="NZ_STEB01000032.1"/>
</dbReference>
<dbReference type="PDB" id="2GMW">
    <property type="method" value="X-ray"/>
    <property type="resolution" value="1.50 A"/>
    <property type="chains" value="A/B=1-191"/>
</dbReference>
<dbReference type="PDB" id="3ESQ">
    <property type="method" value="X-ray"/>
    <property type="resolution" value="1.70 A"/>
    <property type="chains" value="A=1-191"/>
</dbReference>
<dbReference type="PDB" id="3ESR">
    <property type="method" value="X-ray"/>
    <property type="resolution" value="1.95 A"/>
    <property type="chains" value="A=1-191"/>
</dbReference>
<dbReference type="PDB" id="3L1U">
    <property type="method" value="X-ray"/>
    <property type="resolution" value="1.95 A"/>
    <property type="chains" value="A/B=1-191"/>
</dbReference>
<dbReference type="PDB" id="3L1V">
    <property type="method" value="X-ray"/>
    <property type="resolution" value="1.95 A"/>
    <property type="chains" value="A/B=1-191"/>
</dbReference>
<dbReference type="PDB" id="3L8E">
    <property type="method" value="X-ray"/>
    <property type="resolution" value="1.64 A"/>
    <property type="chains" value="A/B=1-187"/>
</dbReference>
<dbReference type="PDB" id="3L8F">
    <property type="method" value="X-ray"/>
    <property type="resolution" value="1.79 A"/>
    <property type="chains" value="A=1-187"/>
</dbReference>
<dbReference type="PDB" id="3L8G">
    <property type="method" value="X-ray"/>
    <property type="resolution" value="2.18 A"/>
    <property type="chains" value="A=1-187"/>
</dbReference>
<dbReference type="PDBsum" id="2GMW"/>
<dbReference type="PDBsum" id="3ESQ"/>
<dbReference type="PDBsum" id="3ESR"/>
<dbReference type="PDBsum" id="3L1U"/>
<dbReference type="PDBsum" id="3L1V"/>
<dbReference type="PDBsum" id="3L8E"/>
<dbReference type="PDBsum" id="3L8F"/>
<dbReference type="PDBsum" id="3L8G"/>
<dbReference type="SMR" id="P63228"/>
<dbReference type="BioGRID" id="4259752">
    <property type="interactions" value="293"/>
</dbReference>
<dbReference type="BioGRID" id="849279">
    <property type="interactions" value="4"/>
</dbReference>
<dbReference type="DIP" id="DIP-47998N"/>
<dbReference type="FunCoup" id="P63228">
    <property type="interactions" value="305"/>
</dbReference>
<dbReference type="IntAct" id="P63228">
    <property type="interactions" value="11"/>
</dbReference>
<dbReference type="STRING" id="511145.b0200"/>
<dbReference type="jPOST" id="P63228"/>
<dbReference type="PaxDb" id="511145-b0200"/>
<dbReference type="EnsemblBacteria" id="AAC73311">
    <property type="protein sequence ID" value="AAC73311"/>
    <property type="gene ID" value="b0200"/>
</dbReference>
<dbReference type="GeneID" id="93777223"/>
<dbReference type="GeneID" id="944879"/>
<dbReference type="KEGG" id="ecj:JW0196"/>
<dbReference type="KEGG" id="eco:b0200"/>
<dbReference type="KEGG" id="ecoc:C3026_00930"/>
<dbReference type="PATRIC" id="fig|1411691.4.peg.2078"/>
<dbReference type="EchoBASE" id="EB1687"/>
<dbReference type="eggNOG" id="COG0241">
    <property type="taxonomic scope" value="Bacteria"/>
</dbReference>
<dbReference type="HOGENOM" id="CLU_085077_3_0_6"/>
<dbReference type="InParanoid" id="P63228"/>
<dbReference type="OMA" id="FMIGDKE"/>
<dbReference type="OrthoDB" id="9781367at2"/>
<dbReference type="PhylomeDB" id="P63228"/>
<dbReference type="BioCyc" id="EcoCyc:EG11736-MONOMER"/>
<dbReference type="BioCyc" id="MetaCyc:EG11736-MONOMER"/>
<dbReference type="BRENDA" id="3.1.3.82">
    <property type="organism ID" value="2026"/>
</dbReference>
<dbReference type="UniPathway" id="UPA00356">
    <property type="reaction ID" value="UER00438"/>
</dbReference>
<dbReference type="UniPathway" id="UPA00958"/>
<dbReference type="EvolutionaryTrace" id="P63228"/>
<dbReference type="PRO" id="PR:P63228"/>
<dbReference type="Proteomes" id="UP000000625">
    <property type="component" value="Chromosome"/>
</dbReference>
<dbReference type="GO" id="GO:0005829">
    <property type="term" value="C:cytosol"/>
    <property type="evidence" value="ECO:0000314"/>
    <property type="project" value="EcoCyc"/>
</dbReference>
<dbReference type="GO" id="GO:0034200">
    <property type="term" value="F:D-glycero-beta-D-manno-heptose 1,7-bisphosphate 7-phosphatase activity"/>
    <property type="evidence" value="ECO:0000314"/>
    <property type="project" value="UniProtKB"/>
</dbReference>
<dbReference type="GO" id="GO:0000287">
    <property type="term" value="F:magnesium ion binding"/>
    <property type="evidence" value="ECO:0000314"/>
    <property type="project" value="UniProtKB"/>
</dbReference>
<dbReference type="GO" id="GO:0008270">
    <property type="term" value="F:zinc ion binding"/>
    <property type="evidence" value="ECO:0000314"/>
    <property type="project" value="UniProtKB"/>
</dbReference>
<dbReference type="GO" id="GO:0097171">
    <property type="term" value="P:ADP-L-glycero-beta-D-manno-heptose biosynthetic process"/>
    <property type="evidence" value="ECO:0007669"/>
    <property type="project" value="UniProtKB-UniPathway"/>
</dbReference>
<dbReference type="GO" id="GO:0009244">
    <property type="term" value="P:lipopolysaccharide core region biosynthetic process"/>
    <property type="evidence" value="ECO:0000315"/>
    <property type="project" value="EcoCyc"/>
</dbReference>
<dbReference type="CDD" id="cd07503">
    <property type="entry name" value="HAD_HisB-N"/>
    <property type="match status" value="1"/>
</dbReference>
<dbReference type="FunFam" id="3.40.50.1000:FF:000037">
    <property type="entry name" value="D,D-heptose 1,7-bisphosphate phosphatase"/>
    <property type="match status" value="1"/>
</dbReference>
<dbReference type="Gene3D" id="3.40.50.1000">
    <property type="entry name" value="HAD superfamily/HAD-like"/>
    <property type="match status" value="1"/>
</dbReference>
<dbReference type="InterPro" id="IPR036412">
    <property type="entry name" value="HAD-like_sf"/>
</dbReference>
<dbReference type="InterPro" id="IPR006549">
    <property type="entry name" value="HAD-SF_hydro_IIIA"/>
</dbReference>
<dbReference type="InterPro" id="IPR023214">
    <property type="entry name" value="HAD_sf"/>
</dbReference>
<dbReference type="InterPro" id="IPR004446">
    <property type="entry name" value="Heptose_bisP_phosphatase"/>
</dbReference>
<dbReference type="InterPro" id="IPR006543">
    <property type="entry name" value="Histidinol-phos"/>
</dbReference>
<dbReference type="NCBIfam" id="TIGR00213">
    <property type="entry name" value="GmhB_yaeD"/>
    <property type="match status" value="1"/>
</dbReference>
<dbReference type="NCBIfam" id="TIGR01662">
    <property type="entry name" value="HAD-SF-IIIA"/>
    <property type="match status" value="1"/>
</dbReference>
<dbReference type="NCBIfam" id="TIGR01656">
    <property type="entry name" value="Histidinol-ppas"/>
    <property type="match status" value="1"/>
</dbReference>
<dbReference type="NCBIfam" id="NF006506">
    <property type="entry name" value="PRK08942.1"/>
    <property type="match status" value="1"/>
</dbReference>
<dbReference type="PANTHER" id="PTHR42891">
    <property type="entry name" value="D-GLYCERO-BETA-D-MANNO-HEPTOSE-1,7-BISPHOSPHATE 7-PHOSPHATASE"/>
    <property type="match status" value="1"/>
</dbReference>
<dbReference type="PANTHER" id="PTHR42891:SF1">
    <property type="entry name" value="D-GLYCERO-BETA-D-MANNO-HEPTOSE-1,7-BISPHOSPHATE 7-PHOSPHATASE"/>
    <property type="match status" value="1"/>
</dbReference>
<dbReference type="Pfam" id="PF13242">
    <property type="entry name" value="Hydrolase_like"/>
    <property type="match status" value="1"/>
</dbReference>
<dbReference type="PIRSF" id="PIRSF004682">
    <property type="entry name" value="GmhB"/>
    <property type="match status" value="1"/>
</dbReference>
<dbReference type="SFLD" id="SFLDG01134">
    <property type="entry name" value="C1.5.5:_Heptose_Bisphosphate_P"/>
    <property type="match status" value="1"/>
</dbReference>
<dbReference type="SFLD" id="SFLDS00003">
    <property type="entry name" value="Haloacid_Dehalogenase"/>
    <property type="match status" value="1"/>
</dbReference>
<dbReference type="SUPFAM" id="SSF56784">
    <property type="entry name" value="HAD-like"/>
    <property type="match status" value="1"/>
</dbReference>
<accession>P63228</accession>
<accession>P31546</accession>
<sequence length="191" mass="21294">MAKSVPAIFLDRDGTINVDHGYVHEIDNFEFIDGVIDAMRELKKMGFALVVVTNQSGIARGKFTEAQFETLTEWMDWSLADRDVDLDGIYYCPHHPQGSVEEFRQVCDCRKPHPGMLLSARDYLHIDMAASYMVGDKLEDMQAAVAANVGTKVLVRTGKPITPEAENAADWVLNSLADLPQAIKKQQKPAQ</sequence>
<reference key="1">
    <citation type="submission" date="1993-04" db="EMBL/GenBank/DDBJ databases">
        <title>Nucleotide sequence of 5'flanking region of the ribosomal RNA gene (rrnH) in E. coli.</title>
        <authorList>
            <person name="Miyamoto K."/>
            <person name="Inokuchi H."/>
        </authorList>
    </citation>
    <scope>NUCLEOTIDE SEQUENCE [GENOMIC DNA]</scope>
    <source>
        <strain>K12</strain>
    </source>
</reference>
<reference key="2">
    <citation type="submission" date="1996-02" db="EMBL/GenBank/DDBJ databases">
        <title>Systematic sequencing of the Escherichia coli genome: analysis of the 4.0 - 6.0 min (189,987 - 281,416bp) region.</title>
        <authorList>
            <person name="Takemoto K."/>
            <person name="Mori H."/>
            <person name="Murayama N."/>
            <person name="Kataoka K."/>
            <person name="Yano M."/>
            <person name="Itoh T."/>
            <person name="Yamamoto Y."/>
            <person name="Inokuchi H."/>
            <person name="Miki T."/>
            <person name="Hatada E."/>
            <person name="Fukuda R."/>
            <person name="Ichihara S."/>
            <person name="Mizuno T."/>
            <person name="Makino K."/>
            <person name="Nakata A."/>
            <person name="Yura T."/>
            <person name="Sampei G."/>
            <person name="Mizobuchi K."/>
        </authorList>
    </citation>
    <scope>NUCLEOTIDE SEQUENCE [LARGE SCALE GENOMIC DNA]</scope>
    <source>
        <strain>K12 / W3110 / ATCC 27325 / DSM 5911</strain>
    </source>
</reference>
<reference key="3">
    <citation type="submission" date="1997-01" db="EMBL/GenBank/DDBJ databases">
        <title>Sequence of minutes 4-25 of Escherichia coli.</title>
        <authorList>
            <person name="Chung E."/>
            <person name="Allen E."/>
            <person name="Araujo R."/>
            <person name="Aparicio A.M."/>
            <person name="Davis K."/>
            <person name="Duncan M."/>
            <person name="Federspiel N."/>
            <person name="Hyman R."/>
            <person name="Kalman S."/>
            <person name="Komp C."/>
            <person name="Kurdi O."/>
            <person name="Lew H."/>
            <person name="Lin D."/>
            <person name="Namath A."/>
            <person name="Oefner P."/>
            <person name="Roberts D."/>
            <person name="Schramm S."/>
            <person name="Davis R.W."/>
        </authorList>
    </citation>
    <scope>NUCLEOTIDE SEQUENCE [LARGE SCALE GENOMIC DNA]</scope>
    <source>
        <strain>K12 / MG1655 / ATCC 47076</strain>
    </source>
</reference>
<reference key="4">
    <citation type="journal article" date="1997" name="Science">
        <title>The complete genome sequence of Escherichia coli K-12.</title>
        <authorList>
            <person name="Blattner F.R."/>
            <person name="Plunkett G. III"/>
            <person name="Bloch C.A."/>
            <person name="Perna N.T."/>
            <person name="Burland V."/>
            <person name="Riley M."/>
            <person name="Collado-Vides J."/>
            <person name="Glasner J.D."/>
            <person name="Rode C.K."/>
            <person name="Mayhew G.F."/>
            <person name="Gregor J."/>
            <person name="Davis N.W."/>
            <person name="Kirkpatrick H.A."/>
            <person name="Goeden M.A."/>
            <person name="Rose D.J."/>
            <person name="Mau B."/>
            <person name="Shao Y."/>
        </authorList>
    </citation>
    <scope>NUCLEOTIDE SEQUENCE [LARGE SCALE GENOMIC DNA]</scope>
    <source>
        <strain>K12 / MG1655 / ATCC 47076</strain>
    </source>
</reference>
<reference key="5">
    <citation type="journal article" date="2006" name="Mol. Syst. Biol.">
        <title>Highly accurate genome sequences of Escherichia coli K-12 strains MG1655 and W3110.</title>
        <authorList>
            <person name="Hayashi K."/>
            <person name="Morooka N."/>
            <person name="Yamamoto Y."/>
            <person name="Fujita K."/>
            <person name="Isono K."/>
            <person name="Choi S."/>
            <person name="Ohtsubo E."/>
            <person name="Baba T."/>
            <person name="Wanner B.L."/>
            <person name="Mori H."/>
            <person name="Horiuchi T."/>
        </authorList>
    </citation>
    <scope>NUCLEOTIDE SEQUENCE [LARGE SCALE GENOMIC DNA]</scope>
    <source>
        <strain>K12 / W3110 / ATCC 27325 / DSM 5911</strain>
    </source>
</reference>
<reference key="6">
    <citation type="journal article" date="2002" name="J. Bacteriol.">
        <title>Biosynthesis pathway of ADP-L-glycero-beta-D-manno-heptose in Escherichia coli.</title>
        <authorList>
            <person name="Kneidinger B."/>
            <person name="Marolda C."/>
            <person name="Graninger M."/>
            <person name="Zamyatina A."/>
            <person name="McArthur F."/>
            <person name="Kosma P."/>
            <person name="Valvano M.A."/>
            <person name="Messner P."/>
        </authorList>
    </citation>
    <scope>FUNCTION AS A HEPTOSE 1,7-BISPHOSPHATE PHOSPHATASE</scope>
    <scope>CATALYTIC ACTIVITY</scope>
    <scope>PATHWAY</scope>
    <scope>DISRUPTION PHENOTYPE</scope>
    <scope>NOMENCLATURE</scope>
    <source>
        <strain>K12 / MG1655 / ATCC 47076</strain>
    </source>
</reference>
<reference key="7">
    <citation type="journal article" date="2006" name="J. Biol. Chem.">
        <title>Genome-wide analysis of substrate specificities of the Escherichia coli haloacid dehalogenase-like phosphatase family.</title>
        <authorList>
            <person name="Kuznetsova E."/>
            <person name="Proudfoot M."/>
            <person name="Gonzalez C.F."/>
            <person name="Brown G."/>
            <person name="Omelchenko M.V."/>
            <person name="Borozan I."/>
            <person name="Carmel L."/>
            <person name="Wolf Y.I."/>
            <person name="Mori H."/>
            <person name="Savchenko A.V."/>
            <person name="Arrowsmith C.H."/>
            <person name="Koonin E.V."/>
            <person name="Edwards A.M."/>
            <person name="Yakunin A.F."/>
        </authorList>
    </citation>
    <scope>FUNCTION AS A PHOSPHATASE</scope>
    <scope>BIOPHYSICOCHEMICAL PROPERTIES</scope>
    <scope>SUBSTRATE SPECIFICITY</scope>
    <scope>COFACTOR</scope>
    <scope>PATHWAY</scope>
</reference>
<reference key="8">
    <citation type="journal article" date="2010" name="Biochemistry">
        <title>Divergence of biochemical function in the HAD superfamily: D-glycero-D-manno-heptose-1,7-bisphosphate phosphatase (GmhB).</title>
        <authorList>
            <person name="Wang L."/>
            <person name="Huang H."/>
            <person name="Nguyen H.H."/>
            <person name="Allen K.N."/>
            <person name="Mariano P.S."/>
            <person name="Dunaway-Mariano D."/>
        </authorList>
    </citation>
    <scope>FUNCTION</scope>
    <scope>CATALYTIC ACTIVITY</scope>
    <scope>SUBSTRATE SPECIFICITY</scope>
    <scope>KINETIC PARAMETERS</scope>
    <scope>PATHWAY</scope>
    <source>
        <strain>K12</strain>
    </source>
</reference>
<reference key="9">
    <citation type="journal article" date="2019" name="Biochemistry">
        <title>Biosynthesis of GDP-d-glycero-alpha-d-manno-heptose for the Capsular Polysaccharide of Campylobacter jejuni.</title>
        <authorList>
            <person name="Huddleston J.P."/>
            <person name="Raushel F.M."/>
        </authorList>
    </citation>
    <scope>FUNCTION</scope>
    <scope>CATALYTIC ACTIVITY</scope>
    <scope>BIOPHYSICOCHEMICAL PROPERTIES</scope>
</reference>
<reference key="10">
    <citation type="journal article" date="2010" name="Biochemistry">
        <title>Structural and kinetic characterization of the LPS biosynthetic enzyme D-alpha,beta-D-heptose-1,7-bisphosphate phosphatase (GmhB) from Escherichia coli.</title>
        <authorList>
            <person name="Taylor P.L."/>
            <person name="Sugiman-Marangos S."/>
            <person name="Zhang K."/>
            <person name="Valvano M.A."/>
            <person name="Wright G.D."/>
            <person name="Junop M.S."/>
        </authorList>
    </citation>
    <scope>X-RAY CRYSTALLOGRAPHY (1.50 ANGSTROMS) IN COMPLEX WITH DIVALENT CATIONS AND SUBSTRATE ANALOGS</scope>
    <scope>CATALYTIC ACTIVITY</scope>
    <scope>COFACTOR</scope>
    <scope>BIOPHYSICOCHEMICAL PROPERTIES</scope>
    <scope>REACTION MECHANISM</scope>
    <scope>SUBUNIT</scope>
    <scope>PATHWAY</scope>
    <scope>DISRUPTION PHENOTYPE</scope>
    <scope>ACTIVE SITE</scope>
    <scope>MUTAGENESIS OF ASP-11; ASP-13; CYS-107 AND LYS-111</scope>
</reference>
<reference key="11">
    <citation type="journal article" date="2010" name="Biochemistry">
        <title>Structural determinants of substrate recognition in the HAD superfamily member D-glycero-D-manno-heptose-1,7-bisphosphate phosphatase (GmhB).</title>
        <authorList>
            <person name="Nguyen H.H."/>
            <person name="Wang L."/>
            <person name="Huang H."/>
            <person name="Peisach E."/>
            <person name="Dunaway-Mariano D."/>
            <person name="Allen K.N."/>
        </authorList>
    </citation>
    <scope>X-RAY CRYSTALLOGRAPHY (1.64 ANGSTROMS) OF 1-187 IN COMPLEX WITH SUBSTRATE ANALOGS</scope>
    <scope>CATALYTIC ACTIVITY</scope>
    <scope>COFACTOR</scope>
    <scope>SUBUNIT</scope>
    <scope>ACTIVE SITE</scope>
    <scope>MUTAGENESIS OF ASP-13; CYS-92; CYS-107; CYS-109; ARG-110 AND LYS-137</scope>
</reference>